<dbReference type="EMBL" id="CP000512">
    <property type="protein sequence ID" value="ABM34056.1"/>
    <property type="molecule type" value="Genomic_DNA"/>
</dbReference>
<dbReference type="RefSeq" id="WP_011796553.1">
    <property type="nucleotide sequence ID" value="NC_008752.1"/>
</dbReference>
<dbReference type="SMR" id="A1TSW8"/>
<dbReference type="STRING" id="397945.Aave_3501"/>
<dbReference type="KEGG" id="aav:Aave_3501"/>
<dbReference type="eggNOG" id="COG1301">
    <property type="taxonomic scope" value="Bacteria"/>
</dbReference>
<dbReference type="HOGENOM" id="CLU_019375_7_0_4"/>
<dbReference type="OrthoDB" id="9766690at2"/>
<dbReference type="Proteomes" id="UP000002596">
    <property type="component" value="Chromosome"/>
</dbReference>
<dbReference type="GO" id="GO:0005886">
    <property type="term" value="C:plasma membrane"/>
    <property type="evidence" value="ECO:0007669"/>
    <property type="project" value="UniProtKB-SubCell"/>
</dbReference>
<dbReference type="GO" id="GO:0015138">
    <property type="term" value="F:fumarate transmembrane transporter activity"/>
    <property type="evidence" value="ECO:0007669"/>
    <property type="project" value="TreeGrafter"/>
</dbReference>
<dbReference type="GO" id="GO:0015366">
    <property type="term" value="F:malate:proton symporter activity"/>
    <property type="evidence" value="ECO:0007669"/>
    <property type="project" value="TreeGrafter"/>
</dbReference>
<dbReference type="GO" id="GO:0015141">
    <property type="term" value="F:succinate transmembrane transporter activity"/>
    <property type="evidence" value="ECO:0007669"/>
    <property type="project" value="TreeGrafter"/>
</dbReference>
<dbReference type="GO" id="GO:0070778">
    <property type="term" value="P:L-aspartate transmembrane transport"/>
    <property type="evidence" value="ECO:0007669"/>
    <property type="project" value="TreeGrafter"/>
</dbReference>
<dbReference type="FunFam" id="1.10.3860.10:FF:000001">
    <property type="entry name" value="C4-dicarboxylate transport protein"/>
    <property type="match status" value="1"/>
</dbReference>
<dbReference type="Gene3D" id="1.10.3860.10">
    <property type="entry name" value="Sodium:dicarboxylate symporter"/>
    <property type="match status" value="1"/>
</dbReference>
<dbReference type="HAMAP" id="MF_01300">
    <property type="entry name" value="C4_dicarb_transport"/>
    <property type="match status" value="1"/>
</dbReference>
<dbReference type="InterPro" id="IPR023954">
    <property type="entry name" value="C4_dicarb_transport"/>
</dbReference>
<dbReference type="InterPro" id="IPR001991">
    <property type="entry name" value="Na-dicarboxylate_symporter"/>
</dbReference>
<dbReference type="InterPro" id="IPR018107">
    <property type="entry name" value="Na-dicarboxylate_symporter_CS"/>
</dbReference>
<dbReference type="InterPro" id="IPR036458">
    <property type="entry name" value="Na:dicarbo_symporter_sf"/>
</dbReference>
<dbReference type="NCBIfam" id="NF002461">
    <property type="entry name" value="PRK01663.1"/>
    <property type="match status" value="1"/>
</dbReference>
<dbReference type="NCBIfam" id="NF009587">
    <property type="entry name" value="PRK13027.1"/>
    <property type="match status" value="1"/>
</dbReference>
<dbReference type="PANTHER" id="PTHR42865:SF1">
    <property type="entry name" value="AEROBIC C4-DICARBOXYLATE TRANSPORT PROTEIN"/>
    <property type="match status" value="1"/>
</dbReference>
<dbReference type="PANTHER" id="PTHR42865">
    <property type="entry name" value="PROTON/GLUTAMATE-ASPARTATE SYMPORTER"/>
    <property type="match status" value="1"/>
</dbReference>
<dbReference type="Pfam" id="PF00375">
    <property type="entry name" value="SDF"/>
    <property type="match status" value="1"/>
</dbReference>
<dbReference type="PRINTS" id="PR00173">
    <property type="entry name" value="EDTRNSPORT"/>
</dbReference>
<dbReference type="SUPFAM" id="SSF118215">
    <property type="entry name" value="Proton glutamate symport protein"/>
    <property type="match status" value="1"/>
</dbReference>
<dbReference type="PROSITE" id="PS00713">
    <property type="entry name" value="NA_DICARBOXYL_SYMP_1"/>
    <property type="match status" value="1"/>
</dbReference>
<dbReference type="PROSITE" id="PS00714">
    <property type="entry name" value="NA_DICARBOXYL_SYMP_2"/>
    <property type="match status" value="1"/>
</dbReference>
<comment type="function">
    <text evidence="1">Responsible for the transport of dicarboxylates such as succinate, fumarate, and malate from the periplasm across the membrane.</text>
</comment>
<comment type="subcellular location">
    <subcellularLocation>
        <location evidence="1">Cell inner membrane</location>
        <topology evidence="1">Multi-pass membrane protein</topology>
    </subcellularLocation>
</comment>
<comment type="similarity">
    <text evidence="1">Belongs to the dicarboxylate/amino acid:cation symporter (DAACS) (TC 2.A.23) family.</text>
</comment>
<evidence type="ECO:0000255" key="1">
    <source>
        <dbReference type="HAMAP-Rule" id="MF_01300"/>
    </source>
</evidence>
<organism>
    <name type="scientific">Paracidovorax citrulli (strain AAC00-1)</name>
    <name type="common">Acidovorax citrulli</name>
    <dbReference type="NCBI Taxonomy" id="397945"/>
    <lineage>
        <taxon>Bacteria</taxon>
        <taxon>Pseudomonadati</taxon>
        <taxon>Pseudomonadota</taxon>
        <taxon>Betaproteobacteria</taxon>
        <taxon>Burkholderiales</taxon>
        <taxon>Comamonadaceae</taxon>
        <taxon>Paracidovorax</taxon>
    </lineage>
</organism>
<reference key="1">
    <citation type="submission" date="2006-12" db="EMBL/GenBank/DDBJ databases">
        <title>Complete sequence of Acidovorax avenae subsp. citrulli AAC00-1.</title>
        <authorList>
            <person name="Copeland A."/>
            <person name="Lucas S."/>
            <person name="Lapidus A."/>
            <person name="Barry K."/>
            <person name="Detter J.C."/>
            <person name="Glavina del Rio T."/>
            <person name="Dalin E."/>
            <person name="Tice H."/>
            <person name="Pitluck S."/>
            <person name="Kiss H."/>
            <person name="Brettin T."/>
            <person name="Bruce D."/>
            <person name="Han C."/>
            <person name="Tapia R."/>
            <person name="Gilna P."/>
            <person name="Schmutz J."/>
            <person name="Larimer F."/>
            <person name="Land M."/>
            <person name="Hauser L."/>
            <person name="Kyrpides N."/>
            <person name="Kim E."/>
            <person name="Stahl D."/>
            <person name="Richardson P."/>
        </authorList>
    </citation>
    <scope>NUCLEOTIDE SEQUENCE [LARGE SCALE GENOMIC DNA]</scope>
    <source>
        <strain>AAC00-1</strain>
    </source>
</reference>
<protein>
    <recommendedName>
        <fullName evidence="1">C4-dicarboxylate transport protein</fullName>
    </recommendedName>
</protein>
<feature type="chain" id="PRO_0000321964" description="C4-dicarboxylate transport protein">
    <location>
        <begin position="1"/>
        <end position="451"/>
    </location>
</feature>
<feature type="transmembrane region" description="Helical" evidence="1">
    <location>
        <begin position="17"/>
        <end position="37"/>
    </location>
</feature>
<feature type="transmembrane region" description="Helical" evidence="1">
    <location>
        <begin position="53"/>
        <end position="73"/>
    </location>
</feature>
<feature type="transmembrane region" description="Helical" evidence="1">
    <location>
        <begin position="85"/>
        <end position="105"/>
    </location>
</feature>
<feature type="transmembrane region" description="Helical" evidence="1">
    <location>
        <begin position="153"/>
        <end position="173"/>
    </location>
</feature>
<feature type="transmembrane region" description="Helical" evidence="1">
    <location>
        <begin position="193"/>
        <end position="213"/>
    </location>
</feature>
<feature type="transmembrane region" description="Helical" evidence="1">
    <location>
        <begin position="231"/>
        <end position="251"/>
    </location>
</feature>
<feature type="transmembrane region" description="Helical" evidence="1">
    <location>
        <begin position="306"/>
        <end position="326"/>
    </location>
</feature>
<feature type="transmembrane region" description="Helical" evidence="1">
    <location>
        <begin position="339"/>
        <end position="359"/>
    </location>
</feature>
<feature type="transmembrane region" description="Helical" evidence="1">
    <location>
        <begin position="361"/>
        <end position="381"/>
    </location>
</feature>
<name>DCTA_PARC0</name>
<keyword id="KW-0997">Cell inner membrane</keyword>
<keyword id="KW-1003">Cell membrane</keyword>
<keyword id="KW-0472">Membrane</keyword>
<keyword id="KW-0769">Symport</keyword>
<keyword id="KW-0812">Transmembrane</keyword>
<keyword id="KW-1133">Transmembrane helix</keyword>
<keyword id="KW-0813">Transport</keyword>
<sequence>MTANARIPARKLPLYRSLYVQVLFAVVVGVLLGHFYPEIGEKMKPLGDGFIKLIKMIIAPIIFCTVVVGIAGMEDMKKVGRTGGLALLYFEIVSSVALVIGLIVVNVLQPGAGMNVDASAIDTKSIAAYTAPGKMGTTTDFLMNIIPTTVVDAFAKGEILQVLLIAVMFGFALHRFGGRGTLVFDFIEKTSHVLFTIVGYIMKVAPIGAFGAMSFTIGKYGVGSLLSLGKLMGSFYLTCLLFVFVVLGLIARFHGFSIWKFVKYIKEELLIVLGTSSSESVLPRMMEKMENLGARKTTVGLVIPTGYSFNLDGTSIYLTMAAVFIAQATNTPLDITHQITLLLVLLLTSKGAAGITGSGFIVLAATLSAVGHVPVAGLALILGIDRFMSEARALTNLVGNGVATIVVAKWTGDLDTEQLKQRLDNPDWVAAQEPEAILDHKTERMDVSGSR</sequence>
<gene>
    <name evidence="1" type="primary">dctA</name>
    <name type="ordered locus">Aave_3501</name>
</gene>
<proteinExistence type="inferred from homology"/>
<accession>A1TSW8</accession>